<name>RS14Z_STRPM</name>
<sequence>MAKKSMIAKNKRPAKHSTQAYTRCEKCGRPHSVYRKFKLCRVCFRELAYKGQIPGVVKASW</sequence>
<accession>Q48VT6</accession>
<gene>
    <name evidence="1" type="primary">rpsZ</name>
    <name evidence="1" type="synonym">rpsN1</name>
    <name type="ordered locus">M28_Spy0056</name>
</gene>
<keyword id="KW-0479">Metal-binding</keyword>
<keyword id="KW-0687">Ribonucleoprotein</keyword>
<keyword id="KW-0689">Ribosomal protein</keyword>
<keyword id="KW-0694">RNA-binding</keyword>
<keyword id="KW-0699">rRNA-binding</keyword>
<keyword id="KW-0862">Zinc</keyword>
<comment type="function">
    <text evidence="1">Binds 16S rRNA, required for the assembly of 30S particles and may also be responsible for determining the conformation of the 16S rRNA at the A site.</text>
</comment>
<comment type="cofactor">
    <cofactor evidence="1">
        <name>Zn(2+)</name>
        <dbReference type="ChEBI" id="CHEBI:29105"/>
    </cofactor>
    <text evidence="1">Binds 1 zinc ion per subunit.</text>
</comment>
<comment type="subunit">
    <text evidence="1">Part of the 30S ribosomal subunit. Contacts proteins S3 and S10.</text>
</comment>
<comment type="similarity">
    <text evidence="1">Belongs to the universal ribosomal protein uS14 family. Zinc-binding uS14 subfamily.</text>
</comment>
<evidence type="ECO:0000255" key="1">
    <source>
        <dbReference type="HAMAP-Rule" id="MF_01364"/>
    </source>
</evidence>
<evidence type="ECO:0000305" key="2"/>
<organism>
    <name type="scientific">Streptococcus pyogenes serotype M28 (strain MGAS6180)</name>
    <dbReference type="NCBI Taxonomy" id="319701"/>
    <lineage>
        <taxon>Bacteria</taxon>
        <taxon>Bacillati</taxon>
        <taxon>Bacillota</taxon>
        <taxon>Bacilli</taxon>
        <taxon>Lactobacillales</taxon>
        <taxon>Streptococcaceae</taxon>
        <taxon>Streptococcus</taxon>
    </lineage>
</organism>
<feature type="chain" id="PRO_0000269147" description="Small ribosomal subunit protein uS14B">
    <location>
        <begin position="1"/>
        <end position="61"/>
    </location>
</feature>
<feature type="binding site" evidence="1">
    <location>
        <position position="24"/>
    </location>
    <ligand>
        <name>Zn(2+)</name>
        <dbReference type="ChEBI" id="CHEBI:29105"/>
    </ligand>
</feature>
<feature type="binding site" evidence="1">
    <location>
        <position position="27"/>
    </location>
    <ligand>
        <name>Zn(2+)</name>
        <dbReference type="ChEBI" id="CHEBI:29105"/>
    </ligand>
</feature>
<feature type="binding site" evidence="1">
    <location>
        <position position="40"/>
    </location>
    <ligand>
        <name>Zn(2+)</name>
        <dbReference type="ChEBI" id="CHEBI:29105"/>
    </ligand>
</feature>
<feature type="binding site" evidence="1">
    <location>
        <position position="43"/>
    </location>
    <ligand>
        <name>Zn(2+)</name>
        <dbReference type="ChEBI" id="CHEBI:29105"/>
    </ligand>
</feature>
<dbReference type="EMBL" id="CP000056">
    <property type="protein sequence ID" value="AAX71170.1"/>
    <property type="molecule type" value="Genomic_DNA"/>
</dbReference>
<dbReference type="RefSeq" id="WP_002987746.1">
    <property type="nucleotide sequence ID" value="NC_007296.2"/>
</dbReference>
<dbReference type="SMR" id="Q48VT6"/>
<dbReference type="KEGG" id="spb:M28_Spy0056"/>
<dbReference type="HOGENOM" id="CLU_139869_3_0_9"/>
<dbReference type="GO" id="GO:0015935">
    <property type="term" value="C:small ribosomal subunit"/>
    <property type="evidence" value="ECO:0007669"/>
    <property type="project" value="TreeGrafter"/>
</dbReference>
<dbReference type="GO" id="GO:0019843">
    <property type="term" value="F:rRNA binding"/>
    <property type="evidence" value="ECO:0007669"/>
    <property type="project" value="UniProtKB-UniRule"/>
</dbReference>
<dbReference type="GO" id="GO:0003735">
    <property type="term" value="F:structural constituent of ribosome"/>
    <property type="evidence" value="ECO:0007669"/>
    <property type="project" value="InterPro"/>
</dbReference>
<dbReference type="GO" id="GO:0008270">
    <property type="term" value="F:zinc ion binding"/>
    <property type="evidence" value="ECO:0007669"/>
    <property type="project" value="UniProtKB-UniRule"/>
</dbReference>
<dbReference type="GO" id="GO:0006412">
    <property type="term" value="P:translation"/>
    <property type="evidence" value="ECO:0007669"/>
    <property type="project" value="UniProtKB-UniRule"/>
</dbReference>
<dbReference type="FunFam" id="4.10.830.10:FF:000001">
    <property type="entry name" value="30S ribosomal protein S14 type Z"/>
    <property type="match status" value="1"/>
</dbReference>
<dbReference type="Gene3D" id="4.10.830.10">
    <property type="entry name" value="30s Ribosomal Protein S14, Chain N"/>
    <property type="match status" value="1"/>
</dbReference>
<dbReference type="HAMAP" id="MF_01364_B">
    <property type="entry name" value="Ribosomal_uS14_2_B"/>
    <property type="match status" value="1"/>
</dbReference>
<dbReference type="InterPro" id="IPR001209">
    <property type="entry name" value="Ribosomal_uS14"/>
</dbReference>
<dbReference type="InterPro" id="IPR023053">
    <property type="entry name" value="Ribosomal_uS14_bact"/>
</dbReference>
<dbReference type="InterPro" id="IPR018271">
    <property type="entry name" value="Ribosomal_uS14_CS"/>
</dbReference>
<dbReference type="InterPro" id="IPR043140">
    <property type="entry name" value="Ribosomal_uS14_sf"/>
</dbReference>
<dbReference type="NCBIfam" id="NF005974">
    <property type="entry name" value="PRK08061.1"/>
    <property type="match status" value="1"/>
</dbReference>
<dbReference type="PANTHER" id="PTHR19836">
    <property type="entry name" value="30S RIBOSOMAL PROTEIN S14"/>
    <property type="match status" value="1"/>
</dbReference>
<dbReference type="PANTHER" id="PTHR19836:SF26">
    <property type="entry name" value="SMALL RIBOSOMAL SUBUNIT PROTEIN US14B"/>
    <property type="match status" value="1"/>
</dbReference>
<dbReference type="Pfam" id="PF00253">
    <property type="entry name" value="Ribosomal_S14"/>
    <property type="match status" value="1"/>
</dbReference>
<dbReference type="SUPFAM" id="SSF57716">
    <property type="entry name" value="Glucocorticoid receptor-like (DNA-binding domain)"/>
    <property type="match status" value="1"/>
</dbReference>
<dbReference type="PROSITE" id="PS00527">
    <property type="entry name" value="RIBOSOMAL_S14"/>
    <property type="match status" value="1"/>
</dbReference>
<reference key="1">
    <citation type="journal article" date="2005" name="J. Infect. Dis.">
        <title>Genome sequence of a serotype M28 strain of group A Streptococcus: potential new insights into puerperal sepsis and bacterial disease specificity.</title>
        <authorList>
            <person name="Green N.M."/>
            <person name="Zhang S."/>
            <person name="Porcella S.F."/>
            <person name="Nagiec M.J."/>
            <person name="Barbian K.D."/>
            <person name="Beres S.B."/>
            <person name="Lefebvre R.B."/>
            <person name="Musser J.M."/>
        </authorList>
    </citation>
    <scope>NUCLEOTIDE SEQUENCE [LARGE SCALE GENOMIC DNA]</scope>
    <source>
        <strain>MGAS6180</strain>
    </source>
</reference>
<proteinExistence type="inferred from homology"/>
<protein>
    <recommendedName>
        <fullName evidence="1">Small ribosomal subunit protein uS14B</fullName>
    </recommendedName>
    <alternativeName>
        <fullName evidence="2">30S ribosomal protein S14 type Z</fullName>
    </alternativeName>
</protein>